<keyword id="KW-1015">Disulfide bond</keyword>
<keyword id="KW-0378">Hydrolase</keyword>
<keyword id="KW-0479">Metal-binding</keyword>
<keyword id="KW-0482">Metalloprotease</keyword>
<keyword id="KW-0574">Periplasm</keyword>
<keyword id="KW-0645">Protease</keyword>
<keyword id="KW-1185">Reference proteome</keyword>
<keyword id="KW-0732">Signal</keyword>
<keyword id="KW-0862">Zinc</keyword>
<accession>B7LBI2</accession>
<gene>
    <name evidence="1" type="primary">mepA</name>
    <name type="ordered locus">EC55989_2572</name>
</gene>
<sequence>MNKTAIALLALLASSASLAATPWQKITQPVPGSAQSIGSFSNGCIVGADTLPIQSEHYQVMRTDQRRYFGHPDLVMFIQRLSSQVSNLGMGTVLIGDMGMPAGGRFNGGHASHQTGLDVDIFLQLPKTRWTSAQLLRPQALDLVSRDGKHVVSTLWKPEIFSLIKLAAQDKDVTRIFVNPAIKQQLCLDAGTDRDWLRKVRPWFQHRAHMHVRLRCPADSLECEDQPLPPPGDGCGAELQSWFAPPKPGTTKPEKKTPSPLPPSCQALLDEHVI</sequence>
<reference key="1">
    <citation type="journal article" date="2009" name="PLoS Genet.">
        <title>Organised genome dynamics in the Escherichia coli species results in highly diverse adaptive paths.</title>
        <authorList>
            <person name="Touchon M."/>
            <person name="Hoede C."/>
            <person name="Tenaillon O."/>
            <person name="Barbe V."/>
            <person name="Baeriswyl S."/>
            <person name="Bidet P."/>
            <person name="Bingen E."/>
            <person name="Bonacorsi S."/>
            <person name="Bouchier C."/>
            <person name="Bouvet O."/>
            <person name="Calteau A."/>
            <person name="Chiapello H."/>
            <person name="Clermont O."/>
            <person name="Cruveiller S."/>
            <person name="Danchin A."/>
            <person name="Diard M."/>
            <person name="Dossat C."/>
            <person name="Karoui M.E."/>
            <person name="Frapy E."/>
            <person name="Garry L."/>
            <person name="Ghigo J.M."/>
            <person name="Gilles A.M."/>
            <person name="Johnson J."/>
            <person name="Le Bouguenec C."/>
            <person name="Lescat M."/>
            <person name="Mangenot S."/>
            <person name="Martinez-Jehanne V."/>
            <person name="Matic I."/>
            <person name="Nassif X."/>
            <person name="Oztas S."/>
            <person name="Petit M.A."/>
            <person name="Pichon C."/>
            <person name="Rouy Z."/>
            <person name="Ruf C.S."/>
            <person name="Schneider D."/>
            <person name="Tourret J."/>
            <person name="Vacherie B."/>
            <person name="Vallenet D."/>
            <person name="Medigue C."/>
            <person name="Rocha E.P.C."/>
            <person name="Denamur E."/>
        </authorList>
    </citation>
    <scope>NUCLEOTIDE SEQUENCE [LARGE SCALE GENOMIC DNA]</scope>
    <source>
        <strain>55989 / EAEC</strain>
    </source>
</reference>
<proteinExistence type="inferred from homology"/>
<feature type="signal peptide" evidence="1">
    <location>
        <begin position="1"/>
        <end position="19"/>
    </location>
</feature>
<feature type="chain" id="PRO_1000186094" description="Penicillin-insensitive murein endopeptidase">
    <location>
        <begin position="20"/>
        <end position="274"/>
    </location>
</feature>
<feature type="region of interest" description="Disordered" evidence="2">
    <location>
        <begin position="228"/>
        <end position="264"/>
    </location>
</feature>
<feature type="binding site" evidence="1">
    <location>
        <position position="110"/>
    </location>
    <ligand>
        <name>Zn(2+)</name>
        <dbReference type="ChEBI" id="CHEBI:29105"/>
        <label>1</label>
    </ligand>
</feature>
<feature type="binding site" evidence="1">
    <location>
        <position position="113"/>
    </location>
    <ligand>
        <name>Zn(2+)</name>
        <dbReference type="ChEBI" id="CHEBI:29105"/>
        <label>1</label>
    </ligand>
</feature>
<feature type="binding site" evidence="1">
    <location>
        <position position="120"/>
    </location>
    <ligand>
        <name>Zn(2+)</name>
        <dbReference type="ChEBI" id="CHEBI:29105"/>
        <label>1</label>
    </ligand>
</feature>
<feature type="binding site" evidence="1">
    <location>
        <position position="147"/>
    </location>
    <ligand>
        <name>Zn(2+)</name>
        <dbReference type="ChEBI" id="CHEBI:29105"/>
        <label>2</label>
    </ligand>
</feature>
<feature type="binding site" evidence="1">
    <location>
        <position position="150"/>
    </location>
    <ligand>
        <name>Zn(2+)</name>
        <dbReference type="ChEBI" id="CHEBI:29105"/>
        <label>2</label>
    </ligand>
</feature>
<feature type="binding site" evidence="1">
    <location>
        <position position="211"/>
    </location>
    <ligand>
        <name>Zn(2+)</name>
        <dbReference type="ChEBI" id="CHEBI:29105"/>
        <label>1</label>
    </ligand>
</feature>
<feature type="disulfide bond" evidence="1">
    <location>
        <begin position="44"/>
        <end position="265"/>
    </location>
</feature>
<feature type="disulfide bond" evidence="1">
    <location>
        <begin position="187"/>
        <end position="235"/>
    </location>
</feature>
<feature type="disulfide bond" evidence="1">
    <location>
        <begin position="216"/>
        <end position="223"/>
    </location>
</feature>
<comment type="function">
    <text evidence="1">Murein endopeptidase that cleaves the D-alanyl-meso-2,6-diamino-pimelyl amide bond that connects peptidoglycan strands. Likely plays a role in the removal of murein from the sacculus.</text>
</comment>
<comment type="cofactor">
    <cofactor evidence="1">
        <name>Zn(2+)</name>
        <dbReference type="ChEBI" id="CHEBI:29105"/>
    </cofactor>
    <text evidence="1">Binds 2 Zn(2+) ions per subunit. Zn(2+) ion 1 is bound in the active site. Zn(2+) ion 2 is bound at the dimer interface by residues from both subunits.</text>
</comment>
<comment type="subunit">
    <text evidence="1">Dimer.</text>
</comment>
<comment type="subcellular location">
    <subcellularLocation>
        <location evidence="1">Periplasm</location>
    </subcellularLocation>
</comment>
<comment type="similarity">
    <text evidence="1">Belongs to the peptidase M74 family.</text>
</comment>
<dbReference type="EC" id="3.4.24.-" evidence="1"/>
<dbReference type="EMBL" id="CU928145">
    <property type="protein sequence ID" value="CAU98440.1"/>
    <property type="molecule type" value="Genomic_DNA"/>
</dbReference>
<dbReference type="RefSeq" id="WP_001043820.1">
    <property type="nucleotide sequence ID" value="NC_011748.1"/>
</dbReference>
<dbReference type="SMR" id="B7LBI2"/>
<dbReference type="MEROPS" id="M74.001"/>
<dbReference type="KEGG" id="eck:EC55989_2572"/>
<dbReference type="HOGENOM" id="CLU_052496_0_0_6"/>
<dbReference type="Proteomes" id="UP000000746">
    <property type="component" value="Chromosome"/>
</dbReference>
<dbReference type="GO" id="GO:0030288">
    <property type="term" value="C:outer membrane-bounded periplasmic space"/>
    <property type="evidence" value="ECO:0007669"/>
    <property type="project" value="InterPro"/>
</dbReference>
<dbReference type="GO" id="GO:0046872">
    <property type="term" value="F:metal ion binding"/>
    <property type="evidence" value="ECO:0007669"/>
    <property type="project" value="UniProtKB-KW"/>
</dbReference>
<dbReference type="GO" id="GO:0004222">
    <property type="term" value="F:metalloendopeptidase activity"/>
    <property type="evidence" value="ECO:0007669"/>
    <property type="project" value="UniProtKB-UniRule"/>
</dbReference>
<dbReference type="GO" id="GO:0004252">
    <property type="term" value="F:serine-type endopeptidase activity"/>
    <property type="evidence" value="ECO:0007669"/>
    <property type="project" value="InterPro"/>
</dbReference>
<dbReference type="GO" id="GO:0000270">
    <property type="term" value="P:peptidoglycan metabolic process"/>
    <property type="evidence" value="ECO:0007669"/>
    <property type="project" value="UniProtKB-UniRule"/>
</dbReference>
<dbReference type="GO" id="GO:0006508">
    <property type="term" value="P:proteolysis"/>
    <property type="evidence" value="ECO:0007669"/>
    <property type="project" value="UniProtKB-KW"/>
</dbReference>
<dbReference type="FunFam" id="3.30.1380.10:FF:000002">
    <property type="entry name" value="Penicillin-insensitive murein endopeptidase"/>
    <property type="match status" value="1"/>
</dbReference>
<dbReference type="Gene3D" id="3.30.1380.10">
    <property type="match status" value="1"/>
</dbReference>
<dbReference type="HAMAP" id="MF_01623">
    <property type="entry name" value="MepA"/>
    <property type="match status" value="1"/>
</dbReference>
<dbReference type="InterPro" id="IPR009045">
    <property type="entry name" value="Hedgehog_sig/DD-Pept_Zn-bd_sf"/>
</dbReference>
<dbReference type="InterPro" id="IPR005073">
    <property type="entry name" value="Peptidase_M74"/>
</dbReference>
<dbReference type="NCBIfam" id="NF006947">
    <property type="entry name" value="PRK09429.1"/>
    <property type="match status" value="1"/>
</dbReference>
<dbReference type="Pfam" id="PF03411">
    <property type="entry name" value="Peptidase_M74"/>
    <property type="match status" value="1"/>
</dbReference>
<dbReference type="PIRSF" id="PIRSF018455">
    <property type="entry name" value="MepA"/>
    <property type="match status" value="1"/>
</dbReference>
<dbReference type="SUPFAM" id="SSF55166">
    <property type="entry name" value="Hedgehog/DD-peptidase"/>
    <property type="match status" value="1"/>
</dbReference>
<evidence type="ECO:0000255" key="1">
    <source>
        <dbReference type="HAMAP-Rule" id="MF_01623"/>
    </source>
</evidence>
<evidence type="ECO:0000256" key="2">
    <source>
        <dbReference type="SAM" id="MobiDB-lite"/>
    </source>
</evidence>
<organism>
    <name type="scientific">Escherichia coli (strain 55989 / EAEC)</name>
    <dbReference type="NCBI Taxonomy" id="585055"/>
    <lineage>
        <taxon>Bacteria</taxon>
        <taxon>Pseudomonadati</taxon>
        <taxon>Pseudomonadota</taxon>
        <taxon>Gammaproteobacteria</taxon>
        <taxon>Enterobacterales</taxon>
        <taxon>Enterobacteriaceae</taxon>
        <taxon>Escherichia</taxon>
    </lineage>
</organism>
<protein>
    <recommendedName>
        <fullName evidence="1">Penicillin-insensitive murein endopeptidase</fullName>
        <ecNumber evidence="1">3.4.24.-</ecNumber>
    </recommendedName>
    <alternativeName>
        <fullName evidence="1">D-alanyl-D-alanine-endopeptidase</fullName>
        <shortName evidence="1">DD-endopeptidase</shortName>
    </alternativeName>
</protein>
<name>MEPA_ECO55</name>